<organism>
    <name type="scientific">Buchnera aphidicola subsp. Schizaphis graminum (strain Sg)</name>
    <dbReference type="NCBI Taxonomy" id="198804"/>
    <lineage>
        <taxon>Bacteria</taxon>
        <taxon>Pseudomonadati</taxon>
        <taxon>Pseudomonadota</taxon>
        <taxon>Gammaproteobacteria</taxon>
        <taxon>Enterobacterales</taxon>
        <taxon>Erwiniaceae</taxon>
        <taxon>Buchnera</taxon>
    </lineage>
</organism>
<keyword id="KW-0067">ATP-binding</keyword>
<keyword id="KW-0436">Ligase</keyword>
<keyword id="KW-0479">Metal-binding</keyword>
<keyword id="KW-0547">Nucleotide-binding</keyword>
<keyword id="KW-0671">Queuosine biosynthesis</keyword>
<keyword id="KW-0862">Zinc</keyword>
<accession>Q8K986</accession>
<reference key="1">
    <citation type="journal article" date="2002" name="Science">
        <title>50 million years of genomic stasis in endosymbiotic bacteria.</title>
        <authorList>
            <person name="Tamas I."/>
            <person name="Klasson L."/>
            <person name="Canbaeck B."/>
            <person name="Naeslund A.K."/>
            <person name="Eriksson A.-S."/>
            <person name="Wernegreen J.J."/>
            <person name="Sandstroem J.P."/>
            <person name="Moran N.A."/>
            <person name="Andersson S.G.E."/>
        </authorList>
    </citation>
    <scope>NUCLEOTIDE SEQUENCE [LARGE SCALE GENOMIC DNA]</scope>
    <source>
        <strain>Sg</strain>
    </source>
</reference>
<sequence>MKKILIIFSGGQDSTTCLIHYTNIYKEIYCITFDYNQLHKSEIDSARFISNYFNVKKHIFVDLKCLKNLSISSLTDEKISILDNHPLNFSLPSTFVPGRNILFLTLSSIYAFNHQINSIVLGVNEIDFSGYPDCRNAFLKKMNDVVQIGMNCKINFQSPLINLSKAEIWALSDYWNSTQFILNNTVTCYQGIQGKGCGQCQSCILRNDGFNKWKSNPSYYMKKLKEKFNFDN</sequence>
<comment type="function">
    <text evidence="1">Catalyzes the ATP-dependent conversion of 7-carboxy-7-deazaguanine (CDG) to 7-cyano-7-deazaguanine (preQ(0)).</text>
</comment>
<comment type="catalytic activity">
    <reaction evidence="1">
        <text>7-carboxy-7-deazaguanine + NH4(+) + ATP = 7-cyano-7-deazaguanine + ADP + phosphate + H2O + H(+)</text>
        <dbReference type="Rhea" id="RHEA:27982"/>
        <dbReference type="ChEBI" id="CHEBI:15377"/>
        <dbReference type="ChEBI" id="CHEBI:15378"/>
        <dbReference type="ChEBI" id="CHEBI:28938"/>
        <dbReference type="ChEBI" id="CHEBI:30616"/>
        <dbReference type="ChEBI" id="CHEBI:43474"/>
        <dbReference type="ChEBI" id="CHEBI:45075"/>
        <dbReference type="ChEBI" id="CHEBI:61036"/>
        <dbReference type="ChEBI" id="CHEBI:456216"/>
        <dbReference type="EC" id="6.3.4.20"/>
    </reaction>
</comment>
<comment type="cofactor">
    <cofactor evidence="1">
        <name>Zn(2+)</name>
        <dbReference type="ChEBI" id="CHEBI:29105"/>
    </cofactor>
    <text evidence="1">Binds 1 zinc ion per subunit.</text>
</comment>
<comment type="pathway">
    <text evidence="1">Purine metabolism; 7-cyano-7-deazaguanine biosynthesis.</text>
</comment>
<comment type="similarity">
    <text evidence="1">Belongs to the QueC family.</text>
</comment>
<dbReference type="EC" id="6.3.4.20" evidence="1"/>
<dbReference type="EMBL" id="AE013218">
    <property type="protein sequence ID" value="AAM68006.1"/>
    <property type="molecule type" value="Genomic_DNA"/>
</dbReference>
<dbReference type="RefSeq" id="WP_011053973.1">
    <property type="nucleotide sequence ID" value="NC_004061.1"/>
</dbReference>
<dbReference type="SMR" id="Q8K986"/>
<dbReference type="STRING" id="198804.BUsg_463"/>
<dbReference type="GeneID" id="93003934"/>
<dbReference type="KEGG" id="bas:BUsg_463"/>
<dbReference type="eggNOG" id="COG0603">
    <property type="taxonomic scope" value="Bacteria"/>
</dbReference>
<dbReference type="HOGENOM" id="CLU_081854_0_0_6"/>
<dbReference type="UniPathway" id="UPA00391"/>
<dbReference type="Proteomes" id="UP000000416">
    <property type="component" value="Chromosome"/>
</dbReference>
<dbReference type="GO" id="GO:0005524">
    <property type="term" value="F:ATP binding"/>
    <property type="evidence" value="ECO:0007669"/>
    <property type="project" value="UniProtKB-UniRule"/>
</dbReference>
<dbReference type="GO" id="GO:0016879">
    <property type="term" value="F:ligase activity, forming carbon-nitrogen bonds"/>
    <property type="evidence" value="ECO:0007669"/>
    <property type="project" value="UniProtKB-UniRule"/>
</dbReference>
<dbReference type="GO" id="GO:0008270">
    <property type="term" value="F:zinc ion binding"/>
    <property type="evidence" value="ECO:0007669"/>
    <property type="project" value="UniProtKB-UniRule"/>
</dbReference>
<dbReference type="GO" id="GO:0008616">
    <property type="term" value="P:queuosine biosynthetic process"/>
    <property type="evidence" value="ECO:0007669"/>
    <property type="project" value="UniProtKB-UniRule"/>
</dbReference>
<dbReference type="CDD" id="cd01995">
    <property type="entry name" value="QueC-like"/>
    <property type="match status" value="1"/>
</dbReference>
<dbReference type="Gene3D" id="3.40.50.620">
    <property type="entry name" value="HUPs"/>
    <property type="match status" value="1"/>
</dbReference>
<dbReference type="HAMAP" id="MF_01633">
    <property type="entry name" value="QueC"/>
    <property type="match status" value="1"/>
</dbReference>
<dbReference type="InterPro" id="IPR018317">
    <property type="entry name" value="QueC"/>
</dbReference>
<dbReference type="InterPro" id="IPR014729">
    <property type="entry name" value="Rossmann-like_a/b/a_fold"/>
</dbReference>
<dbReference type="NCBIfam" id="TIGR00364">
    <property type="entry name" value="7-cyano-7-deazaguanine synthase QueC"/>
    <property type="match status" value="1"/>
</dbReference>
<dbReference type="PANTHER" id="PTHR42914">
    <property type="entry name" value="7-CYANO-7-DEAZAGUANINE SYNTHASE"/>
    <property type="match status" value="1"/>
</dbReference>
<dbReference type="PANTHER" id="PTHR42914:SF1">
    <property type="entry name" value="7-CYANO-7-DEAZAGUANINE SYNTHASE"/>
    <property type="match status" value="1"/>
</dbReference>
<dbReference type="Pfam" id="PF06508">
    <property type="entry name" value="QueC"/>
    <property type="match status" value="1"/>
</dbReference>
<dbReference type="PIRSF" id="PIRSF006293">
    <property type="entry name" value="ExsB"/>
    <property type="match status" value="1"/>
</dbReference>
<dbReference type="SUPFAM" id="SSF52402">
    <property type="entry name" value="Adenine nucleotide alpha hydrolases-like"/>
    <property type="match status" value="1"/>
</dbReference>
<name>QUEC_BUCAP</name>
<proteinExistence type="inferred from homology"/>
<evidence type="ECO:0000255" key="1">
    <source>
        <dbReference type="HAMAP-Rule" id="MF_01633"/>
    </source>
</evidence>
<gene>
    <name evidence="1" type="primary">queC</name>
    <name type="ordered locus">BUsg_463</name>
</gene>
<protein>
    <recommendedName>
        <fullName evidence="1">7-cyano-7-deazaguanine synthase</fullName>
        <ecNumber evidence="1">6.3.4.20</ecNumber>
    </recommendedName>
    <alternativeName>
        <fullName evidence="1">7-cyano-7-carbaguanine synthase</fullName>
    </alternativeName>
    <alternativeName>
        <fullName evidence="1">PreQ(0) synthase</fullName>
    </alternativeName>
    <alternativeName>
        <fullName evidence="1">Queuosine biosynthesis protein QueC</fullName>
    </alternativeName>
</protein>
<feature type="chain" id="PRO_0000216267" description="7-cyano-7-deazaguanine synthase">
    <location>
        <begin position="1"/>
        <end position="232"/>
    </location>
</feature>
<feature type="binding site" evidence="1">
    <location>
        <begin position="8"/>
        <end position="18"/>
    </location>
    <ligand>
        <name>ATP</name>
        <dbReference type="ChEBI" id="CHEBI:30616"/>
    </ligand>
</feature>
<feature type="binding site" evidence="1">
    <location>
        <position position="188"/>
    </location>
    <ligand>
        <name>Zn(2+)</name>
        <dbReference type="ChEBI" id="CHEBI:29105"/>
    </ligand>
</feature>
<feature type="binding site" evidence="1">
    <location>
        <position position="197"/>
    </location>
    <ligand>
        <name>Zn(2+)</name>
        <dbReference type="ChEBI" id="CHEBI:29105"/>
    </ligand>
</feature>
<feature type="binding site" evidence="1">
    <location>
        <position position="200"/>
    </location>
    <ligand>
        <name>Zn(2+)</name>
        <dbReference type="ChEBI" id="CHEBI:29105"/>
    </ligand>
</feature>
<feature type="binding site" evidence="1">
    <location>
        <position position="203"/>
    </location>
    <ligand>
        <name>Zn(2+)</name>
        <dbReference type="ChEBI" id="CHEBI:29105"/>
    </ligand>
</feature>